<sequence>MANQPSAEELKKKLSEMQFYVTQDRGTEPPFTGRLLHNKRDGVYHCLVCDTPLFHSHTKYDSGCGWPSFYQPVSEEAIRYIDDFSHGMQRVEIRCGNCDAHLGHVFPDGPQPTGERYCVNSASLAFSDEKNGDQLKG</sequence>
<feature type="chain" id="PRO_1000145380" description="Peptide methionine sulfoxide reductase MsrB">
    <location>
        <begin position="1"/>
        <end position="137"/>
    </location>
</feature>
<feature type="domain" description="MsrB" evidence="2">
    <location>
        <begin position="7"/>
        <end position="129"/>
    </location>
</feature>
<feature type="active site" description="Nucleophile" evidence="2">
    <location>
        <position position="118"/>
    </location>
</feature>
<feature type="binding site" evidence="2">
    <location>
        <position position="46"/>
    </location>
    <ligand>
        <name>Zn(2+)</name>
        <dbReference type="ChEBI" id="CHEBI:29105"/>
    </ligand>
</feature>
<feature type="binding site" evidence="2">
    <location>
        <position position="49"/>
    </location>
    <ligand>
        <name>Zn(2+)</name>
        <dbReference type="ChEBI" id="CHEBI:29105"/>
    </ligand>
</feature>
<feature type="binding site" evidence="2">
    <location>
        <position position="95"/>
    </location>
    <ligand>
        <name>Zn(2+)</name>
        <dbReference type="ChEBI" id="CHEBI:29105"/>
    </ligand>
</feature>
<feature type="binding site" evidence="2">
    <location>
        <position position="98"/>
    </location>
    <ligand>
        <name>Zn(2+)</name>
        <dbReference type="ChEBI" id="CHEBI:29105"/>
    </ligand>
</feature>
<dbReference type="EC" id="1.8.4.12" evidence="1"/>
<dbReference type="EMBL" id="CP001144">
    <property type="protein sequence ID" value="ACH77108.1"/>
    <property type="molecule type" value="Genomic_DNA"/>
</dbReference>
<dbReference type="RefSeq" id="WP_001519539.1">
    <property type="nucleotide sequence ID" value="NC_011205.1"/>
</dbReference>
<dbReference type="SMR" id="B5FJF9"/>
<dbReference type="KEGG" id="sed:SeD_A2065"/>
<dbReference type="HOGENOM" id="CLU_031040_8_5_6"/>
<dbReference type="Proteomes" id="UP000008322">
    <property type="component" value="Chromosome"/>
</dbReference>
<dbReference type="GO" id="GO:0005737">
    <property type="term" value="C:cytoplasm"/>
    <property type="evidence" value="ECO:0007669"/>
    <property type="project" value="TreeGrafter"/>
</dbReference>
<dbReference type="GO" id="GO:0033743">
    <property type="term" value="F:peptide-methionine (R)-S-oxide reductase activity"/>
    <property type="evidence" value="ECO:0007669"/>
    <property type="project" value="UniProtKB-UniRule"/>
</dbReference>
<dbReference type="GO" id="GO:0008270">
    <property type="term" value="F:zinc ion binding"/>
    <property type="evidence" value="ECO:0007669"/>
    <property type="project" value="UniProtKB-UniRule"/>
</dbReference>
<dbReference type="GO" id="GO:0030091">
    <property type="term" value="P:protein repair"/>
    <property type="evidence" value="ECO:0007669"/>
    <property type="project" value="InterPro"/>
</dbReference>
<dbReference type="GO" id="GO:0006979">
    <property type="term" value="P:response to oxidative stress"/>
    <property type="evidence" value="ECO:0007669"/>
    <property type="project" value="InterPro"/>
</dbReference>
<dbReference type="FunFam" id="2.170.150.20:FF:000001">
    <property type="entry name" value="Peptide methionine sulfoxide reductase MsrB"/>
    <property type="match status" value="1"/>
</dbReference>
<dbReference type="Gene3D" id="2.170.150.20">
    <property type="entry name" value="Peptide methionine sulfoxide reductase"/>
    <property type="match status" value="1"/>
</dbReference>
<dbReference type="HAMAP" id="MF_01400">
    <property type="entry name" value="MsrB"/>
    <property type="match status" value="1"/>
</dbReference>
<dbReference type="InterPro" id="IPR028427">
    <property type="entry name" value="Met_Sox_Rdtase_MsrB"/>
</dbReference>
<dbReference type="InterPro" id="IPR002579">
    <property type="entry name" value="Met_Sox_Rdtase_MsrB_dom"/>
</dbReference>
<dbReference type="InterPro" id="IPR011057">
    <property type="entry name" value="Mss4-like_sf"/>
</dbReference>
<dbReference type="NCBIfam" id="TIGR00357">
    <property type="entry name" value="peptide-methionine (R)-S-oxide reductase MsrB"/>
    <property type="match status" value="1"/>
</dbReference>
<dbReference type="PANTHER" id="PTHR10173">
    <property type="entry name" value="METHIONINE SULFOXIDE REDUCTASE"/>
    <property type="match status" value="1"/>
</dbReference>
<dbReference type="PANTHER" id="PTHR10173:SF52">
    <property type="entry name" value="METHIONINE-R-SULFOXIDE REDUCTASE B1"/>
    <property type="match status" value="1"/>
</dbReference>
<dbReference type="Pfam" id="PF01641">
    <property type="entry name" value="SelR"/>
    <property type="match status" value="1"/>
</dbReference>
<dbReference type="SUPFAM" id="SSF51316">
    <property type="entry name" value="Mss4-like"/>
    <property type="match status" value="1"/>
</dbReference>
<dbReference type="PROSITE" id="PS51790">
    <property type="entry name" value="MSRB"/>
    <property type="match status" value="1"/>
</dbReference>
<protein>
    <recommendedName>
        <fullName evidence="1">Peptide methionine sulfoxide reductase MsrB</fullName>
        <ecNumber evidence="1">1.8.4.12</ecNumber>
    </recommendedName>
    <alternativeName>
        <fullName evidence="1">Peptide-methionine (R)-S-oxide reductase</fullName>
    </alternativeName>
</protein>
<gene>
    <name evidence="1" type="primary">msrB</name>
    <name type="ordered locus">SeD_A2065</name>
</gene>
<accession>B5FJF9</accession>
<reference key="1">
    <citation type="journal article" date="2011" name="J. Bacteriol.">
        <title>Comparative genomics of 28 Salmonella enterica isolates: evidence for CRISPR-mediated adaptive sublineage evolution.</title>
        <authorList>
            <person name="Fricke W.F."/>
            <person name="Mammel M.K."/>
            <person name="McDermott P.F."/>
            <person name="Tartera C."/>
            <person name="White D.G."/>
            <person name="Leclerc J.E."/>
            <person name="Ravel J."/>
            <person name="Cebula T.A."/>
        </authorList>
    </citation>
    <scope>NUCLEOTIDE SEQUENCE [LARGE SCALE GENOMIC DNA]</scope>
    <source>
        <strain>CT_02021853</strain>
    </source>
</reference>
<proteinExistence type="inferred from homology"/>
<organism>
    <name type="scientific">Salmonella dublin (strain CT_02021853)</name>
    <dbReference type="NCBI Taxonomy" id="439851"/>
    <lineage>
        <taxon>Bacteria</taxon>
        <taxon>Pseudomonadati</taxon>
        <taxon>Pseudomonadota</taxon>
        <taxon>Gammaproteobacteria</taxon>
        <taxon>Enterobacterales</taxon>
        <taxon>Enterobacteriaceae</taxon>
        <taxon>Salmonella</taxon>
    </lineage>
</organism>
<keyword id="KW-0479">Metal-binding</keyword>
<keyword id="KW-0560">Oxidoreductase</keyword>
<keyword id="KW-0862">Zinc</keyword>
<comment type="catalytic activity">
    <reaction evidence="1">
        <text>L-methionyl-[protein] + [thioredoxin]-disulfide + H2O = L-methionyl-(R)-S-oxide-[protein] + [thioredoxin]-dithiol</text>
        <dbReference type="Rhea" id="RHEA:24164"/>
        <dbReference type="Rhea" id="RHEA-COMP:10698"/>
        <dbReference type="Rhea" id="RHEA-COMP:10700"/>
        <dbReference type="Rhea" id="RHEA-COMP:12313"/>
        <dbReference type="Rhea" id="RHEA-COMP:12314"/>
        <dbReference type="ChEBI" id="CHEBI:15377"/>
        <dbReference type="ChEBI" id="CHEBI:16044"/>
        <dbReference type="ChEBI" id="CHEBI:29950"/>
        <dbReference type="ChEBI" id="CHEBI:45764"/>
        <dbReference type="ChEBI" id="CHEBI:50058"/>
        <dbReference type="EC" id="1.8.4.12"/>
    </reaction>
</comment>
<comment type="cofactor">
    <cofactor evidence="1">
        <name>Zn(2+)</name>
        <dbReference type="ChEBI" id="CHEBI:29105"/>
    </cofactor>
    <text evidence="1">Binds 1 zinc ion per subunit. The zinc ion is important for the structural integrity of the protein.</text>
</comment>
<comment type="similarity">
    <text evidence="1">Belongs to the MsrB Met sulfoxide reductase family.</text>
</comment>
<name>MSRB_SALDC</name>
<evidence type="ECO:0000255" key="1">
    <source>
        <dbReference type="HAMAP-Rule" id="MF_01400"/>
    </source>
</evidence>
<evidence type="ECO:0000255" key="2">
    <source>
        <dbReference type="PROSITE-ProRule" id="PRU01126"/>
    </source>
</evidence>